<comment type="subunit">
    <text evidence="1">Component of the mitochondrial small ribosomal subunit.</text>
</comment>
<comment type="subcellular location">
    <subcellularLocation>
        <location evidence="1">Mitochondrion</location>
    </subcellularLocation>
</comment>
<comment type="similarity">
    <text evidence="3">Belongs to the mitochondrion-specific ribosomal protein mS23 family.</text>
</comment>
<protein>
    <recommendedName>
        <fullName evidence="3">Small ribosomal subunit protein mS23</fullName>
    </recommendedName>
    <alternativeName>
        <fullName>37S ribosomal protein S25, mitochondrial</fullName>
    </alternativeName>
</protein>
<reference key="1">
    <citation type="journal article" date="2007" name="Plant Cell">
        <title>Dothideomycete-plant interactions illuminated by genome sequencing and EST analysis of the wheat pathogen Stagonospora nodorum.</title>
        <authorList>
            <person name="Hane J.K."/>
            <person name="Lowe R.G.T."/>
            <person name="Solomon P.S."/>
            <person name="Tan K.-C."/>
            <person name="Schoch C.L."/>
            <person name="Spatafora J.W."/>
            <person name="Crous P.W."/>
            <person name="Kodira C.D."/>
            <person name="Birren B.W."/>
            <person name="Galagan J.E."/>
            <person name="Torriani S.F.F."/>
            <person name="McDonald B.A."/>
            <person name="Oliver R.P."/>
        </authorList>
    </citation>
    <scope>NUCLEOTIDE SEQUENCE [LARGE SCALE GENOMIC DNA]</scope>
    <source>
        <strain>SN15 / ATCC MYA-4574 / FGSC 10173</strain>
    </source>
</reference>
<feature type="chain" id="PRO_0000343557" description="Small ribosomal subunit protein mS23">
    <location>
        <begin position="1"/>
        <end position="262"/>
    </location>
</feature>
<feature type="region of interest" description="Disordered" evidence="2">
    <location>
        <begin position="211"/>
        <end position="262"/>
    </location>
</feature>
<feature type="compositionally biased region" description="Polar residues" evidence="2">
    <location>
        <begin position="242"/>
        <end position="251"/>
    </location>
</feature>
<keyword id="KW-0496">Mitochondrion</keyword>
<keyword id="KW-0687">Ribonucleoprotein</keyword>
<keyword id="KW-0689">Ribosomal protein</keyword>
<organism>
    <name type="scientific">Phaeosphaeria nodorum (strain SN15 / ATCC MYA-4574 / FGSC 10173)</name>
    <name type="common">Glume blotch fungus</name>
    <name type="synonym">Parastagonospora nodorum</name>
    <dbReference type="NCBI Taxonomy" id="321614"/>
    <lineage>
        <taxon>Eukaryota</taxon>
        <taxon>Fungi</taxon>
        <taxon>Dikarya</taxon>
        <taxon>Ascomycota</taxon>
        <taxon>Pezizomycotina</taxon>
        <taxon>Dothideomycetes</taxon>
        <taxon>Pleosporomycetidae</taxon>
        <taxon>Pleosporales</taxon>
        <taxon>Pleosporineae</taxon>
        <taxon>Phaeosphaeriaceae</taxon>
        <taxon>Parastagonospora</taxon>
    </lineage>
</organism>
<gene>
    <name type="primary">RSM25</name>
    <name type="ORF">SNOG_05120</name>
</gene>
<dbReference type="EMBL" id="CH445331">
    <property type="protein sequence ID" value="EAT87511.1"/>
    <property type="molecule type" value="Genomic_DNA"/>
</dbReference>
<dbReference type="RefSeq" id="XP_001795530.1">
    <property type="nucleotide sequence ID" value="XM_001795478.1"/>
</dbReference>
<dbReference type="SMR" id="Q0USZ4"/>
<dbReference type="FunCoup" id="Q0USZ4">
    <property type="interactions" value="106"/>
</dbReference>
<dbReference type="STRING" id="321614.Q0USZ4"/>
<dbReference type="EnsemblFungi" id="SNOT_05120">
    <property type="protein sequence ID" value="SNOT_05120"/>
    <property type="gene ID" value="SNOG_05120"/>
</dbReference>
<dbReference type="GeneID" id="5972405"/>
<dbReference type="KEGG" id="pno:SNOG_05120"/>
<dbReference type="VEuPathDB" id="FungiDB:JI435_051200"/>
<dbReference type="eggNOG" id="ENOG502RZQQ">
    <property type="taxonomic scope" value="Eukaryota"/>
</dbReference>
<dbReference type="HOGENOM" id="CLU_081350_0_0_1"/>
<dbReference type="InParanoid" id="Q0USZ4"/>
<dbReference type="OMA" id="ENWKIWA"/>
<dbReference type="OrthoDB" id="5542239at2759"/>
<dbReference type="Proteomes" id="UP000001055">
    <property type="component" value="Unassembled WGS sequence"/>
</dbReference>
<dbReference type="GO" id="GO:0005763">
    <property type="term" value="C:mitochondrial small ribosomal subunit"/>
    <property type="evidence" value="ECO:0000318"/>
    <property type="project" value="GO_Central"/>
</dbReference>
<dbReference type="GO" id="GO:0003735">
    <property type="term" value="F:structural constituent of ribosome"/>
    <property type="evidence" value="ECO:0000318"/>
    <property type="project" value="GO_Central"/>
</dbReference>
<dbReference type="CDD" id="cd23701">
    <property type="entry name" value="At1g26750"/>
    <property type="match status" value="1"/>
</dbReference>
<dbReference type="InterPro" id="IPR016939">
    <property type="entry name" value="Ribosomal_mS23_fun"/>
</dbReference>
<dbReference type="PANTHER" id="PTHR37799">
    <property type="entry name" value="37S RIBOSOMAL PROTEIN S25, MITOCHONDRIAL"/>
    <property type="match status" value="1"/>
</dbReference>
<dbReference type="PANTHER" id="PTHR37799:SF1">
    <property type="entry name" value="SMALL RIBOSOMAL SUBUNIT PROTEIN MS23"/>
    <property type="match status" value="1"/>
</dbReference>
<dbReference type="Pfam" id="PF13741">
    <property type="entry name" value="MRP-S25"/>
    <property type="match status" value="1"/>
</dbReference>
<dbReference type="PIRSF" id="PIRSF029764">
    <property type="entry name" value="RSM25"/>
    <property type="match status" value="1"/>
</dbReference>
<evidence type="ECO:0000250" key="1"/>
<evidence type="ECO:0000256" key="2">
    <source>
        <dbReference type="SAM" id="MobiDB-lite"/>
    </source>
</evidence>
<evidence type="ECO:0000305" key="3"/>
<accession>Q0USZ4</accession>
<name>RT25_PHANO</name>
<sequence>MGRYDFRPLRVRQTAKALFDSKRNPNLPQWYEVVGNIPPGETLARPILRAPKVRHARKASKLFKPLPITYAEDKLRSDFFGDHPWELARPRLIVEDSGNDAKKYDWSKIVQPGKQLDGESVVQRQMWLMKHRNLSKASAYDAARQEFYAHRHRNEIRARIAKEEAQYVGAYFGKGPLEIGMELEDKSWEAWKRWANVQIEDEQAMRAQMFSGQSDEAPEGEGSDMSAGEYDMAVEELAGQGSIPNTPQSTVVPEGTSAPAHA</sequence>
<proteinExistence type="inferred from homology"/>